<comment type="function">
    <text evidence="1">Attaches a formyl group to the free amino group of methionyl-tRNA(fMet). The formyl group appears to play a dual role in the initiator identity of N-formylmethionyl-tRNA by promoting its recognition by IF2 and preventing the misappropriation of this tRNA by the elongation apparatus.</text>
</comment>
<comment type="catalytic activity">
    <reaction evidence="1">
        <text>L-methionyl-tRNA(fMet) + (6R)-10-formyltetrahydrofolate = N-formyl-L-methionyl-tRNA(fMet) + (6S)-5,6,7,8-tetrahydrofolate + H(+)</text>
        <dbReference type="Rhea" id="RHEA:24380"/>
        <dbReference type="Rhea" id="RHEA-COMP:9952"/>
        <dbReference type="Rhea" id="RHEA-COMP:9953"/>
        <dbReference type="ChEBI" id="CHEBI:15378"/>
        <dbReference type="ChEBI" id="CHEBI:57453"/>
        <dbReference type="ChEBI" id="CHEBI:78530"/>
        <dbReference type="ChEBI" id="CHEBI:78844"/>
        <dbReference type="ChEBI" id="CHEBI:195366"/>
        <dbReference type="EC" id="2.1.2.9"/>
    </reaction>
</comment>
<comment type="similarity">
    <text evidence="1">Belongs to the Fmt family.</text>
</comment>
<sequence length="319" mass="34964">MTNIVFMGTPDFAVPVLRQLLDDGYRVVAVVTQPDKPKGRKRELVPPPVKVEAQKHGIPVLQPTKIREPEQYEQVLAFAPDLIVTAAFGQILPKALLDAPKYGCINVHASLLPELRGGAPIHYAIWQGKTKTGVTIMYMAEKLDAGDMLTQVEVPIEETDTVGTLHDKLSAAGAKLLSETLPLLLEGNLAPIPQEEEKATYAPNIRREQERIDWAQPGEAIYNHIRAFHPWPVTYTTYDGNVWKIWWGEKVPAPSLASPGTILSLEEDGIVVATGSETAIKITELQPAGKKRMAASEFLRGAGSRLAVGTKLGENNERT</sequence>
<feature type="chain" id="PRO_1000020070" description="Methionyl-tRNA formyltransferase">
    <location>
        <begin position="1"/>
        <end position="319"/>
    </location>
</feature>
<feature type="binding site" evidence="1">
    <location>
        <begin position="110"/>
        <end position="113"/>
    </location>
    <ligand>
        <name>(6S)-5,6,7,8-tetrahydrofolate</name>
        <dbReference type="ChEBI" id="CHEBI:57453"/>
    </ligand>
</feature>
<reference key="1">
    <citation type="journal article" date="2007" name="Proc. Natl. Acad. Sci. U.S.A.">
        <title>Genome and proteome of long-chain alkane degrading Geobacillus thermodenitrificans NG80-2 isolated from a deep-subsurface oil reservoir.</title>
        <authorList>
            <person name="Feng L."/>
            <person name="Wang W."/>
            <person name="Cheng J."/>
            <person name="Ren Y."/>
            <person name="Zhao G."/>
            <person name="Gao C."/>
            <person name="Tang Y."/>
            <person name="Liu X."/>
            <person name="Han W."/>
            <person name="Peng X."/>
            <person name="Liu R."/>
            <person name="Wang L."/>
        </authorList>
    </citation>
    <scope>NUCLEOTIDE SEQUENCE [LARGE SCALE GENOMIC DNA]</scope>
    <source>
        <strain>NG80-2</strain>
    </source>
</reference>
<protein>
    <recommendedName>
        <fullName evidence="1">Methionyl-tRNA formyltransferase</fullName>
        <ecNumber evidence="1">2.1.2.9</ecNumber>
    </recommendedName>
</protein>
<proteinExistence type="inferred from homology"/>
<name>FMT_GEOTN</name>
<accession>A4IM47</accession>
<dbReference type="EC" id="2.1.2.9" evidence="1"/>
<dbReference type="EMBL" id="CP000557">
    <property type="protein sequence ID" value="ABO66401.1"/>
    <property type="molecule type" value="Genomic_DNA"/>
</dbReference>
<dbReference type="RefSeq" id="WP_011887115.1">
    <property type="nucleotide sequence ID" value="NC_009328.1"/>
</dbReference>
<dbReference type="SMR" id="A4IM47"/>
<dbReference type="GeneID" id="87621382"/>
<dbReference type="KEGG" id="gtn:GTNG_1025"/>
<dbReference type="eggNOG" id="COG0223">
    <property type="taxonomic scope" value="Bacteria"/>
</dbReference>
<dbReference type="HOGENOM" id="CLU_033347_1_1_9"/>
<dbReference type="Proteomes" id="UP000001578">
    <property type="component" value="Chromosome"/>
</dbReference>
<dbReference type="GO" id="GO:0005829">
    <property type="term" value="C:cytosol"/>
    <property type="evidence" value="ECO:0007669"/>
    <property type="project" value="TreeGrafter"/>
</dbReference>
<dbReference type="GO" id="GO:0004479">
    <property type="term" value="F:methionyl-tRNA formyltransferase activity"/>
    <property type="evidence" value="ECO:0007669"/>
    <property type="project" value="UniProtKB-UniRule"/>
</dbReference>
<dbReference type="CDD" id="cd08646">
    <property type="entry name" value="FMT_core_Met-tRNA-FMT_N"/>
    <property type="match status" value="1"/>
</dbReference>
<dbReference type="CDD" id="cd08704">
    <property type="entry name" value="Met_tRNA_FMT_C"/>
    <property type="match status" value="1"/>
</dbReference>
<dbReference type="FunFam" id="3.40.50.170:FF:000004">
    <property type="entry name" value="Methionyl-tRNA formyltransferase"/>
    <property type="match status" value="1"/>
</dbReference>
<dbReference type="Gene3D" id="3.10.25.10">
    <property type="entry name" value="Formyl transferase, C-terminal domain"/>
    <property type="match status" value="1"/>
</dbReference>
<dbReference type="Gene3D" id="3.40.50.170">
    <property type="entry name" value="Formyl transferase, N-terminal domain"/>
    <property type="match status" value="1"/>
</dbReference>
<dbReference type="HAMAP" id="MF_00182">
    <property type="entry name" value="Formyl_trans"/>
    <property type="match status" value="1"/>
</dbReference>
<dbReference type="InterPro" id="IPR005794">
    <property type="entry name" value="Fmt"/>
</dbReference>
<dbReference type="InterPro" id="IPR005793">
    <property type="entry name" value="Formyl_trans_C"/>
</dbReference>
<dbReference type="InterPro" id="IPR037022">
    <property type="entry name" value="Formyl_trans_C_sf"/>
</dbReference>
<dbReference type="InterPro" id="IPR002376">
    <property type="entry name" value="Formyl_transf_N"/>
</dbReference>
<dbReference type="InterPro" id="IPR036477">
    <property type="entry name" value="Formyl_transf_N_sf"/>
</dbReference>
<dbReference type="InterPro" id="IPR011034">
    <property type="entry name" value="Formyl_transferase-like_C_sf"/>
</dbReference>
<dbReference type="InterPro" id="IPR001555">
    <property type="entry name" value="GART_AS"/>
</dbReference>
<dbReference type="InterPro" id="IPR044135">
    <property type="entry name" value="Met-tRNA-FMT_C"/>
</dbReference>
<dbReference type="InterPro" id="IPR041711">
    <property type="entry name" value="Met-tRNA-FMT_N"/>
</dbReference>
<dbReference type="NCBIfam" id="TIGR00460">
    <property type="entry name" value="fmt"/>
    <property type="match status" value="1"/>
</dbReference>
<dbReference type="PANTHER" id="PTHR11138">
    <property type="entry name" value="METHIONYL-TRNA FORMYLTRANSFERASE"/>
    <property type="match status" value="1"/>
</dbReference>
<dbReference type="PANTHER" id="PTHR11138:SF5">
    <property type="entry name" value="METHIONYL-TRNA FORMYLTRANSFERASE, MITOCHONDRIAL"/>
    <property type="match status" value="1"/>
</dbReference>
<dbReference type="Pfam" id="PF02911">
    <property type="entry name" value="Formyl_trans_C"/>
    <property type="match status" value="1"/>
</dbReference>
<dbReference type="Pfam" id="PF00551">
    <property type="entry name" value="Formyl_trans_N"/>
    <property type="match status" value="1"/>
</dbReference>
<dbReference type="SUPFAM" id="SSF50486">
    <property type="entry name" value="FMT C-terminal domain-like"/>
    <property type="match status" value="1"/>
</dbReference>
<dbReference type="SUPFAM" id="SSF53328">
    <property type="entry name" value="Formyltransferase"/>
    <property type="match status" value="1"/>
</dbReference>
<dbReference type="PROSITE" id="PS00373">
    <property type="entry name" value="GART"/>
    <property type="match status" value="1"/>
</dbReference>
<organism>
    <name type="scientific">Geobacillus thermodenitrificans (strain NG80-2)</name>
    <dbReference type="NCBI Taxonomy" id="420246"/>
    <lineage>
        <taxon>Bacteria</taxon>
        <taxon>Bacillati</taxon>
        <taxon>Bacillota</taxon>
        <taxon>Bacilli</taxon>
        <taxon>Bacillales</taxon>
        <taxon>Anoxybacillaceae</taxon>
        <taxon>Geobacillus</taxon>
    </lineage>
</organism>
<gene>
    <name evidence="1" type="primary">fmt</name>
    <name type="ordered locus">GTNG_1025</name>
</gene>
<keyword id="KW-0648">Protein biosynthesis</keyword>
<keyword id="KW-0808">Transferase</keyword>
<evidence type="ECO:0000255" key="1">
    <source>
        <dbReference type="HAMAP-Rule" id="MF_00182"/>
    </source>
</evidence>